<feature type="chain" id="PRO_1000007073" description="Large ribosomal subunit protein bL12">
    <location>
        <begin position="1"/>
        <end position="124"/>
    </location>
</feature>
<gene>
    <name evidence="1" type="primary">rplL</name>
    <name type="ordered locus">Rsph17025_2543</name>
</gene>
<evidence type="ECO:0000255" key="1">
    <source>
        <dbReference type="HAMAP-Rule" id="MF_00368"/>
    </source>
</evidence>
<evidence type="ECO:0000305" key="2"/>
<name>RL7_CERS5</name>
<sequence>MADLNKLAEDIVGLTLLEAQELKTILKDKYGIEPAAGGAVMVAGPAAAAAPAEEEKTEFDVVLTDAGANKINVIKEVRAITGLGLKEAKDLVEAGGKVKEAASKADAEAMKKKLEEAGAKVELK</sequence>
<reference key="1">
    <citation type="submission" date="2007-04" db="EMBL/GenBank/DDBJ databases">
        <title>Complete sequence of chromosome of Rhodobacter sphaeroides ATCC 17025.</title>
        <authorList>
            <consortium name="US DOE Joint Genome Institute"/>
            <person name="Copeland A."/>
            <person name="Lucas S."/>
            <person name="Lapidus A."/>
            <person name="Barry K."/>
            <person name="Detter J.C."/>
            <person name="Glavina del Rio T."/>
            <person name="Hammon N."/>
            <person name="Israni S."/>
            <person name="Dalin E."/>
            <person name="Tice H."/>
            <person name="Pitluck S."/>
            <person name="Chertkov O."/>
            <person name="Brettin T."/>
            <person name="Bruce D."/>
            <person name="Han C."/>
            <person name="Schmutz J."/>
            <person name="Larimer F."/>
            <person name="Land M."/>
            <person name="Hauser L."/>
            <person name="Kyrpides N."/>
            <person name="Kim E."/>
            <person name="Richardson P."/>
            <person name="Mackenzie C."/>
            <person name="Choudhary M."/>
            <person name="Donohue T.J."/>
            <person name="Kaplan S."/>
        </authorList>
    </citation>
    <scope>NUCLEOTIDE SEQUENCE [LARGE SCALE GENOMIC DNA]</scope>
    <source>
        <strain>ATCC 17025 / ATH 2.4.3</strain>
    </source>
</reference>
<organism>
    <name type="scientific">Cereibacter sphaeroides (strain ATCC 17025 / ATH 2.4.3)</name>
    <name type="common">Rhodobacter sphaeroides</name>
    <dbReference type="NCBI Taxonomy" id="349102"/>
    <lineage>
        <taxon>Bacteria</taxon>
        <taxon>Pseudomonadati</taxon>
        <taxon>Pseudomonadota</taxon>
        <taxon>Alphaproteobacteria</taxon>
        <taxon>Rhodobacterales</taxon>
        <taxon>Paracoccaceae</taxon>
        <taxon>Cereibacter</taxon>
    </lineage>
</organism>
<comment type="function">
    <text evidence="1">Forms part of the ribosomal stalk which helps the ribosome interact with GTP-bound translation factors. Is thus essential for accurate translation.</text>
</comment>
<comment type="subunit">
    <text evidence="1">Homodimer. Part of the ribosomal stalk of the 50S ribosomal subunit. Forms a multimeric L10(L12)X complex, where L10 forms an elongated spine to which 2 to 4 L12 dimers bind in a sequential fashion. Binds GTP-bound translation factors.</text>
</comment>
<comment type="similarity">
    <text evidence="1">Belongs to the bacterial ribosomal protein bL12 family.</text>
</comment>
<accession>A4WVL7</accession>
<protein>
    <recommendedName>
        <fullName evidence="1">Large ribosomal subunit protein bL12</fullName>
    </recommendedName>
    <alternativeName>
        <fullName evidence="2">50S ribosomal protein L7/L12</fullName>
    </alternativeName>
</protein>
<keyword id="KW-0687">Ribonucleoprotein</keyword>
<keyword id="KW-0689">Ribosomal protein</keyword>
<dbReference type="EMBL" id="CP000661">
    <property type="protein sequence ID" value="ABP71431.1"/>
    <property type="molecule type" value="Genomic_DNA"/>
</dbReference>
<dbReference type="SMR" id="A4WVL7"/>
<dbReference type="STRING" id="349102.Rsph17025_2543"/>
<dbReference type="KEGG" id="rsq:Rsph17025_2543"/>
<dbReference type="eggNOG" id="COG0222">
    <property type="taxonomic scope" value="Bacteria"/>
</dbReference>
<dbReference type="HOGENOM" id="CLU_086499_3_0_5"/>
<dbReference type="BioCyc" id="RSPH349102:G1G8M-2621-MONOMER"/>
<dbReference type="GO" id="GO:0022625">
    <property type="term" value="C:cytosolic large ribosomal subunit"/>
    <property type="evidence" value="ECO:0007669"/>
    <property type="project" value="TreeGrafter"/>
</dbReference>
<dbReference type="GO" id="GO:0003729">
    <property type="term" value="F:mRNA binding"/>
    <property type="evidence" value="ECO:0007669"/>
    <property type="project" value="TreeGrafter"/>
</dbReference>
<dbReference type="GO" id="GO:0003735">
    <property type="term" value="F:structural constituent of ribosome"/>
    <property type="evidence" value="ECO:0007669"/>
    <property type="project" value="InterPro"/>
</dbReference>
<dbReference type="GO" id="GO:0006412">
    <property type="term" value="P:translation"/>
    <property type="evidence" value="ECO:0007669"/>
    <property type="project" value="UniProtKB-UniRule"/>
</dbReference>
<dbReference type="CDD" id="cd00387">
    <property type="entry name" value="Ribosomal_L7_L12"/>
    <property type="match status" value="1"/>
</dbReference>
<dbReference type="FunFam" id="3.30.1390.10:FF:000001">
    <property type="entry name" value="50S ribosomal protein L7/L12"/>
    <property type="match status" value="1"/>
</dbReference>
<dbReference type="Gene3D" id="3.30.1390.10">
    <property type="match status" value="1"/>
</dbReference>
<dbReference type="Gene3D" id="1.20.5.710">
    <property type="entry name" value="Single helix bin"/>
    <property type="match status" value="1"/>
</dbReference>
<dbReference type="HAMAP" id="MF_00368">
    <property type="entry name" value="Ribosomal_bL12"/>
    <property type="match status" value="1"/>
</dbReference>
<dbReference type="InterPro" id="IPR000206">
    <property type="entry name" value="Ribosomal_bL12"/>
</dbReference>
<dbReference type="InterPro" id="IPR013823">
    <property type="entry name" value="Ribosomal_bL12_C"/>
</dbReference>
<dbReference type="InterPro" id="IPR014719">
    <property type="entry name" value="Ribosomal_bL12_C/ClpS-like"/>
</dbReference>
<dbReference type="InterPro" id="IPR008932">
    <property type="entry name" value="Ribosomal_bL12_oligo"/>
</dbReference>
<dbReference type="InterPro" id="IPR036235">
    <property type="entry name" value="Ribosomal_bL12_oligo_N_sf"/>
</dbReference>
<dbReference type="NCBIfam" id="TIGR00855">
    <property type="entry name" value="L12"/>
    <property type="match status" value="1"/>
</dbReference>
<dbReference type="PANTHER" id="PTHR45987">
    <property type="entry name" value="39S RIBOSOMAL PROTEIN L12"/>
    <property type="match status" value="1"/>
</dbReference>
<dbReference type="PANTHER" id="PTHR45987:SF4">
    <property type="entry name" value="LARGE RIBOSOMAL SUBUNIT PROTEIN BL12M"/>
    <property type="match status" value="1"/>
</dbReference>
<dbReference type="Pfam" id="PF00542">
    <property type="entry name" value="Ribosomal_L12"/>
    <property type="match status" value="1"/>
</dbReference>
<dbReference type="Pfam" id="PF16320">
    <property type="entry name" value="Ribosomal_L12_N"/>
    <property type="match status" value="1"/>
</dbReference>
<dbReference type="SUPFAM" id="SSF54736">
    <property type="entry name" value="ClpS-like"/>
    <property type="match status" value="1"/>
</dbReference>
<dbReference type="SUPFAM" id="SSF48300">
    <property type="entry name" value="Ribosomal protein L7/12, oligomerisation (N-terminal) domain"/>
    <property type="match status" value="1"/>
</dbReference>
<proteinExistence type="inferred from homology"/>